<accession>F4J3T8</accession>
<accession>Q84W79</accession>
<accession>Q9CAF1</accession>
<accession>Q9LPP2</accession>
<keyword id="KW-0025">Alternative splicing</keyword>
<keyword id="KW-0175">Coiled coil</keyword>
<keyword id="KW-0963">Cytoplasm</keyword>
<keyword id="KW-0967">Endosome</keyword>
<keyword id="KW-0378">Hydrolase</keyword>
<keyword id="KW-0443">Lipid metabolism</keyword>
<keyword id="KW-0472">Membrane</keyword>
<keyword id="KW-0904">Protein phosphatase</keyword>
<keyword id="KW-1185">Reference proteome</keyword>
<reference key="1">
    <citation type="journal article" date="2000" name="Nature">
        <title>Sequence and analysis of chromosome 3 of the plant Arabidopsis thaliana.</title>
        <authorList>
            <person name="Salanoubat M."/>
            <person name="Lemcke K."/>
            <person name="Rieger M."/>
            <person name="Ansorge W."/>
            <person name="Unseld M."/>
            <person name="Fartmann B."/>
            <person name="Valle G."/>
            <person name="Bloecker H."/>
            <person name="Perez-Alonso M."/>
            <person name="Obermaier B."/>
            <person name="Delseny M."/>
            <person name="Boutry M."/>
            <person name="Grivell L.A."/>
            <person name="Mache R."/>
            <person name="Puigdomenech P."/>
            <person name="De Simone V."/>
            <person name="Choisne N."/>
            <person name="Artiguenave F."/>
            <person name="Robert C."/>
            <person name="Brottier P."/>
            <person name="Wincker P."/>
            <person name="Cattolico L."/>
            <person name="Weissenbach J."/>
            <person name="Saurin W."/>
            <person name="Quetier F."/>
            <person name="Schaefer M."/>
            <person name="Mueller-Auer S."/>
            <person name="Gabel C."/>
            <person name="Fuchs M."/>
            <person name="Benes V."/>
            <person name="Wurmbach E."/>
            <person name="Drzonek H."/>
            <person name="Erfle H."/>
            <person name="Jordan N."/>
            <person name="Bangert S."/>
            <person name="Wiedelmann R."/>
            <person name="Kranz H."/>
            <person name="Voss H."/>
            <person name="Holland R."/>
            <person name="Brandt P."/>
            <person name="Nyakatura G."/>
            <person name="Vezzi A."/>
            <person name="D'Angelo M."/>
            <person name="Pallavicini A."/>
            <person name="Toppo S."/>
            <person name="Simionati B."/>
            <person name="Conrad A."/>
            <person name="Hornischer K."/>
            <person name="Kauer G."/>
            <person name="Loehnert T.-H."/>
            <person name="Nordsiek G."/>
            <person name="Reichelt J."/>
            <person name="Scharfe M."/>
            <person name="Schoen O."/>
            <person name="Bargues M."/>
            <person name="Terol J."/>
            <person name="Climent J."/>
            <person name="Navarro P."/>
            <person name="Collado C."/>
            <person name="Perez-Perez A."/>
            <person name="Ottenwaelder B."/>
            <person name="Duchemin D."/>
            <person name="Cooke R."/>
            <person name="Laudie M."/>
            <person name="Berger-Llauro C."/>
            <person name="Purnelle B."/>
            <person name="Masuy D."/>
            <person name="de Haan M."/>
            <person name="Maarse A.C."/>
            <person name="Alcaraz J.-P."/>
            <person name="Cottet A."/>
            <person name="Casacuberta E."/>
            <person name="Monfort A."/>
            <person name="Argiriou A."/>
            <person name="Flores M."/>
            <person name="Liguori R."/>
            <person name="Vitale D."/>
            <person name="Mannhaupt G."/>
            <person name="Haase D."/>
            <person name="Schoof H."/>
            <person name="Rudd S."/>
            <person name="Zaccaria P."/>
            <person name="Mewes H.-W."/>
            <person name="Mayer K.F.X."/>
            <person name="Kaul S."/>
            <person name="Town C.D."/>
            <person name="Koo H.L."/>
            <person name="Tallon L.J."/>
            <person name="Jenkins J."/>
            <person name="Rooney T."/>
            <person name="Rizzo M."/>
            <person name="Walts A."/>
            <person name="Utterback T."/>
            <person name="Fujii C.Y."/>
            <person name="Shea T.P."/>
            <person name="Creasy T.H."/>
            <person name="Haas B."/>
            <person name="Maiti R."/>
            <person name="Wu D."/>
            <person name="Peterson J."/>
            <person name="Van Aken S."/>
            <person name="Pai G."/>
            <person name="Militscher J."/>
            <person name="Sellers P."/>
            <person name="Gill J.E."/>
            <person name="Feldblyum T.V."/>
            <person name="Preuss D."/>
            <person name="Lin X."/>
            <person name="Nierman W.C."/>
            <person name="Salzberg S.L."/>
            <person name="White O."/>
            <person name="Venter J.C."/>
            <person name="Fraser C.M."/>
            <person name="Kaneko T."/>
            <person name="Nakamura Y."/>
            <person name="Sato S."/>
            <person name="Kato T."/>
            <person name="Asamizu E."/>
            <person name="Sasamoto S."/>
            <person name="Kimura T."/>
            <person name="Idesawa K."/>
            <person name="Kawashima K."/>
            <person name="Kishida Y."/>
            <person name="Kiyokawa C."/>
            <person name="Kohara M."/>
            <person name="Matsumoto M."/>
            <person name="Matsuno A."/>
            <person name="Muraki A."/>
            <person name="Nakayama S."/>
            <person name="Nakazaki N."/>
            <person name="Shinpo S."/>
            <person name="Takeuchi C."/>
            <person name="Wada T."/>
            <person name="Watanabe A."/>
            <person name="Yamada M."/>
            <person name="Yasuda M."/>
            <person name="Tabata S."/>
        </authorList>
    </citation>
    <scope>NUCLEOTIDE SEQUENCE [LARGE SCALE GENOMIC DNA]</scope>
    <source>
        <strain>cv. Columbia</strain>
    </source>
</reference>
<reference key="2">
    <citation type="journal article" date="2017" name="Plant J.">
        <title>Araport11: a complete reannotation of the Arabidopsis thaliana reference genome.</title>
        <authorList>
            <person name="Cheng C.Y."/>
            <person name="Krishnakumar V."/>
            <person name="Chan A.P."/>
            <person name="Thibaud-Nissen F."/>
            <person name="Schobel S."/>
            <person name="Town C.D."/>
        </authorList>
    </citation>
    <scope>GENOME REANNOTATION</scope>
    <source>
        <strain>cv. Columbia</strain>
    </source>
</reference>
<reference key="3">
    <citation type="journal article" date="2003" name="Science">
        <title>Empirical analysis of transcriptional activity in the Arabidopsis genome.</title>
        <authorList>
            <person name="Yamada K."/>
            <person name="Lim J."/>
            <person name="Dale J.M."/>
            <person name="Chen H."/>
            <person name="Shinn P."/>
            <person name="Palm C.J."/>
            <person name="Southwick A.M."/>
            <person name="Wu H.C."/>
            <person name="Kim C.J."/>
            <person name="Nguyen M."/>
            <person name="Pham P.K."/>
            <person name="Cheuk R.F."/>
            <person name="Karlin-Newmann G."/>
            <person name="Liu S.X."/>
            <person name="Lam B."/>
            <person name="Sakano H."/>
            <person name="Wu T."/>
            <person name="Yu G."/>
            <person name="Miranda M."/>
            <person name="Quach H.L."/>
            <person name="Tripp M."/>
            <person name="Chang C.H."/>
            <person name="Lee J.M."/>
            <person name="Toriumi M.J."/>
            <person name="Chan M.M."/>
            <person name="Tang C.C."/>
            <person name="Onodera C.S."/>
            <person name="Deng J.M."/>
            <person name="Akiyama K."/>
            <person name="Ansari Y."/>
            <person name="Arakawa T."/>
            <person name="Banh J."/>
            <person name="Banno F."/>
            <person name="Bowser L."/>
            <person name="Brooks S.Y."/>
            <person name="Carninci P."/>
            <person name="Chao Q."/>
            <person name="Choy N."/>
            <person name="Enju A."/>
            <person name="Goldsmith A.D."/>
            <person name="Gurjal M."/>
            <person name="Hansen N.F."/>
            <person name="Hayashizaki Y."/>
            <person name="Johnson-Hopson C."/>
            <person name="Hsuan V.W."/>
            <person name="Iida K."/>
            <person name="Karnes M."/>
            <person name="Khan S."/>
            <person name="Koesema E."/>
            <person name="Ishida J."/>
            <person name="Jiang P.X."/>
            <person name="Jones T."/>
            <person name="Kawai J."/>
            <person name="Kamiya A."/>
            <person name="Meyers C."/>
            <person name="Nakajima M."/>
            <person name="Narusaka M."/>
            <person name="Seki M."/>
            <person name="Sakurai T."/>
            <person name="Satou M."/>
            <person name="Tamse R."/>
            <person name="Vaysberg M."/>
            <person name="Wallender E.K."/>
            <person name="Wong C."/>
            <person name="Yamamura Y."/>
            <person name="Yuan S."/>
            <person name="Shinozaki K."/>
            <person name="Davis R.W."/>
            <person name="Theologis A."/>
            <person name="Ecker J.R."/>
        </authorList>
    </citation>
    <scope>NUCLEOTIDE SEQUENCE [LARGE SCALE MRNA] (ISOFORM 2)</scope>
    <source>
        <strain>cv. Columbia</strain>
    </source>
</reference>
<reference key="4">
    <citation type="journal article" date="2002" name="Plant Physiol.">
        <title>The complement of protein phosphatase catalytic subunits encoded in the genome of Arabidopsis.</title>
        <authorList>
            <person name="Kerk D."/>
            <person name="Bulgrien J."/>
            <person name="Smith D.W."/>
            <person name="Barsam B."/>
            <person name="Veretnik S."/>
            <person name="Gribskov M."/>
        </authorList>
    </citation>
    <scope>GENE FAMILY</scope>
</reference>
<reference key="5">
    <citation type="journal article" date="2008" name="Dev. Biol.">
        <title>Comparative transcriptional profiling and evolutionary analysis of the GRAM domain family in eukaryotes.</title>
        <authorList>
            <person name="Jiang S.Y."/>
            <person name="Ramamoorthy R."/>
            <person name="Ramachandran S."/>
        </authorList>
    </citation>
    <scope>GENE FAMILY</scope>
</reference>
<reference key="6">
    <citation type="journal article" date="2009" name="Plant Signal. Behav.">
        <title>The Arabidopsis chromatin modifier ATX1, the myotubularin-like AtMTM and the response to drought.</title>
        <authorList>
            <person name="Ding Y."/>
            <person name="Lapko H."/>
            <person name="Ndamukong I."/>
            <person name="Xia Y."/>
            <person name="Al-Abdallat A."/>
            <person name="Lalithambika S."/>
            <person name="Sadder M."/>
            <person name="Saleh A."/>
            <person name="Fromm M."/>
            <person name="Riethoven J.-J."/>
            <person name="Lu G."/>
            <person name="Avramova Z."/>
        </authorList>
    </citation>
    <scope>INDUCTION BY DEHYDRATION</scope>
    <scope>FUNCTION</scope>
    <scope>BIOPHYSICOCHEMICAL PROPERTIES</scope>
    <scope>CATALYTIC ACTIVITY</scope>
</reference>
<reference key="7">
    <citation type="journal article" date="2010" name="PLoS ONE">
        <title>Phosphatidylinositol 5-phosphate links dehydration stress to the activity of ARABIDOPSIS TRITHORAX-LIKE factor ATX1.</title>
        <authorList>
            <person name="Ndamukong I."/>
            <person name="Jones D.R."/>
            <person name="Lapko H."/>
            <person name="Divecha N."/>
            <person name="Avramova Z."/>
        </authorList>
    </citation>
    <scope>FUNCTION</scope>
    <scope>DISRUPTION PHENOTYPE</scope>
    <scope>CATALYTIC ACTIVITY</scope>
</reference>
<reference key="8">
    <citation type="journal article" date="2012" name="Plant J.">
        <title>Divergent functions of the myotubularin (MTM) homologs AtMTM1 and AtMTM2 in Arabidopsis thaliana: evolution of the plant MTM family.</title>
        <authorList>
            <person name="Ding Y."/>
            <person name="Ndamukong I."/>
            <person name="Zhao Y."/>
            <person name="Xia Y."/>
            <person name="Riethoven J.-J."/>
            <person name="Jones D.R."/>
            <person name="Divecha N."/>
            <person name="Avramova Z."/>
        </authorList>
    </citation>
    <scope>FUNCTION</scope>
    <scope>DISRUPTION PHENOTYPE</scope>
    <scope>SUBCELLULAR LOCATION</scope>
    <scope>CATALYTIC ACTIVITY</scope>
    <scope>DEVELOPMENTAL STAGE</scope>
    <scope>TISSUE SPECIFICITY</scope>
    <scope>BIOPHYSICOCHEMICAL PROPERTIES</scope>
    <source>
        <strain>cv. Columbia</strain>
    </source>
</reference>
<evidence type="ECO:0000250" key="1"/>
<evidence type="ECO:0000255" key="2"/>
<evidence type="ECO:0000255" key="3">
    <source>
        <dbReference type="PROSITE-ProRule" id="PRU00669"/>
    </source>
</evidence>
<evidence type="ECO:0000255" key="4">
    <source>
        <dbReference type="PROSITE-ProRule" id="PRU10044"/>
    </source>
</evidence>
<evidence type="ECO:0000256" key="5">
    <source>
        <dbReference type="SAM" id="MobiDB-lite"/>
    </source>
</evidence>
<evidence type="ECO:0000269" key="6">
    <source>
    </source>
</evidence>
<evidence type="ECO:0000269" key="7">
    <source>
    </source>
</evidence>
<evidence type="ECO:0000269" key="8">
    <source>
    </source>
</evidence>
<evidence type="ECO:0000303" key="9">
    <source>
    </source>
</evidence>
<evidence type="ECO:0000305" key="10"/>
<evidence type="ECO:0000305" key="11">
    <source>
    </source>
</evidence>
<dbReference type="EC" id="3.1.3.95" evidence="6 8 11"/>
<dbReference type="EC" id="3.1.3.64" evidence="6 8"/>
<dbReference type="EMBL" id="AC011560">
    <property type="protein sequence ID" value="AAG51396.1"/>
    <property type="status" value="ALT_SEQ"/>
    <property type="molecule type" value="Genomic_DNA"/>
</dbReference>
<dbReference type="EMBL" id="AC013428">
    <property type="protein sequence ID" value="AAF76357.1"/>
    <property type="status" value="ALT_SEQ"/>
    <property type="molecule type" value="Genomic_DNA"/>
</dbReference>
<dbReference type="EMBL" id="CP002686">
    <property type="protein sequence ID" value="AEE74924.1"/>
    <property type="molecule type" value="Genomic_DNA"/>
</dbReference>
<dbReference type="EMBL" id="BT004136">
    <property type="protein sequence ID" value="AAO42157.1"/>
    <property type="molecule type" value="mRNA"/>
</dbReference>
<dbReference type="RefSeq" id="NP_187666.5">
    <molecule id="F4J3T8-1"/>
    <property type="nucleotide sequence ID" value="NM_111891.7"/>
</dbReference>
<dbReference type="SMR" id="F4J3T8"/>
<dbReference type="FunCoup" id="F4J3T8">
    <property type="interactions" value="2491"/>
</dbReference>
<dbReference type="STRING" id="3702.F4J3T8"/>
<dbReference type="iPTMnet" id="F4J3T8"/>
<dbReference type="PaxDb" id="3702-AT3G10550.1"/>
<dbReference type="ProteomicsDB" id="251190">
    <molecule id="F4J3T8-1"/>
</dbReference>
<dbReference type="EnsemblPlants" id="AT3G10550.1">
    <molecule id="F4J3T8-1"/>
    <property type="protein sequence ID" value="AT3G10550.1"/>
    <property type="gene ID" value="AT3G10550"/>
</dbReference>
<dbReference type="GeneID" id="820220"/>
<dbReference type="Gramene" id="AT3G10550.1">
    <molecule id="F4J3T8-1"/>
    <property type="protein sequence ID" value="AT3G10550.1"/>
    <property type="gene ID" value="AT3G10550"/>
</dbReference>
<dbReference type="KEGG" id="ath:AT3G10550"/>
<dbReference type="Araport" id="AT3G10550"/>
<dbReference type="TAIR" id="AT3G10550">
    <property type="gene designation" value="MTM1"/>
</dbReference>
<dbReference type="eggNOG" id="KOG4471">
    <property type="taxonomic scope" value="Eukaryota"/>
</dbReference>
<dbReference type="HOGENOM" id="CLU_017601_0_0_1"/>
<dbReference type="InParanoid" id="F4J3T8"/>
<dbReference type="OMA" id="DLRNEWW"/>
<dbReference type="OrthoDB" id="271628at2759"/>
<dbReference type="PRO" id="PR:F4J3T8"/>
<dbReference type="Proteomes" id="UP000006548">
    <property type="component" value="Chromosome 3"/>
</dbReference>
<dbReference type="ExpressionAtlas" id="F4J3T8">
    <property type="expression patterns" value="baseline and differential"/>
</dbReference>
<dbReference type="GO" id="GO:0031410">
    <property type="term" value="C:cytoplasmic vesicle"/>
    <property type="evidence" value="ECO:0000314"/>
    <property type="project" value="UniProtKB"/>
</dbReference>
<dbReference type="GO" id="GO:0010008">
    <property type="term" value="C:endosome membrane"/>
    <property type="evidence" value="ECO:0007669"/>
    <property type="project" value="UniProtKB-SubCell"/>
</dbReference>
<dbReference type="GO" id="GO:0052629">
    <property type="term" value="F:phosphatidylinositol-3,5-bisphosphate 3-phosphatase activity"/>
    <property type="evidence" value="ECO:0000314"/>
    <property type="project" value="UniProtKB"/>
</dbReference>
<dbReference type="GO" id="GO:0004438">
    <property type="term" value="F:phosphatidylinositol-3-phosphate phosphatase activity"/>
    <property type="evidence" value="ECO:0000314"/>
    <property type="project" value="UniProtKB"/>
</dbReference>
<dbReference type="GO" id="GO:0004721">
    <property type="term" value="F:phosphoprotein phosphatase activity"/>
    <property type="evidence" value="ECO:0007669"/>
    <property type="project" value="UniProtKB-KW"/>
</dbReference>
<dbReference type="GO" id="GO:0042631">
    <property type="term" value="P:cellular response to water deprivation"/>
    <property type="evidence" value="ECO:0000270"/>
    <property type="project" value="UniProtKB"/>
</dbReference>
<dbReference type="GO" id="GO:0035556">
    <property type="term" value="P:intracellular signal transduction"/>
    <property type="evidence" value="ECO:0000315"/>
    <property type="project" value="UniProtKB"/>
</dbReference>
<dbReference type="GO" id="GO:0006629">
    <property type="term" value="P:lipid metabolic process"/>
    <property type="evidence" value="ECO:0007669"/>
    <property type="project" value="UniProtKB-KW"/>
</dbReference>
<dbReference type="GO" id="GO:2000070">
    <property type="term" value="P:regulation of response to water deprivation"/>
    <property type="evidence" value="ECO:0000315"/>
    <property type="project" value="UniProtKB"/>
</dbReference>
<dbReference type="CDD" id="cd14507">
    <property type="entry name" value="PTP-MTM-like"/>
    <property type="match status" value="1"/>
</dbReference>
<dbReference type="FunFam" id="2.30.29.30:FF:000619">
    <property type="entry name" value="Phosphatidylinositol-3-phosphatase myotubularin-2"/>
    <property type="match status" value="1"/>
</dbReference>
<dbReference type="Gene3D" id="2.30.29.30">
    <property type="entry name" value="Pleckstrin-homology domain (PH domain)/Phosphotyrosine-binding domain (PTB)"/>
    <property type="match status" value="1"/>
</dbReference>
<dbReference type="InterPro" id="IPR004182">
    <property type="entry name" value="GRAM"/>
</dbReference>
<dbReference type="InterPro" id="IPR030564">
    <property type="entry name" value="Myotubularin"/>
</dbReference>
<dbReference type="InterPro" id="IPR010569">
    <property type="entry name" value="Myotubularin-like_Pase_dom"/>
</dbReference>
<dbReference type="InterPro" id="IPR011993">
    <property type="entry name" value="PH-like_dom_sf"/>
</dbReference>
<dbReference type="InterPro" id="IPR029021">
    <property type="entry name" value="Prot-tyrosine_phosphatase-like"/>
</dbReference>
<dbReference type="InterPro" id="IPR016130">
    <property type="entry name" value="Tyr_Pase_AS"/>
</dbReference>
<dbReference type="PANTHER" id="PTHR10807">
    <property type="entry name" value="MYOTUBULARIN-RELATED"/>
    <property type="match status" value="1"/>
</dbReference>
<dbReference type="PANTHER" id="PTHR10807:SF8">
    <property type="entry name" value="PHOSPHATIDYLINOSITOL-3-PHOSPHATE PHOSPHATASE"/>
    <property type="match status" value="1"/>
</dbReference>
<dbReference type="Pfam" id="PF06602">
    <property type="entry name" value="Myotub-related"/>
    <property type="match status" value="1"/>
</dbReference>
<dbReference type="SMART" id="SM00568">
    <property type="entry name" value="GRAM"/>
    <property type="match status" value="1"/>
</dbReference>
<dbReference type="SUPFAM" id="SSF52799">
    <property type="entry name" value="(Phosphotyrosine protein) phosphatases II"/>
    <property type="match status" value="1"/>
</dbReference>
<dbReference type="SUPFAM" id="SSF50729">
    <property type="entry name" value="PH domain-like"/>
    <property type="match status" value="1"/>
</dbReference>
<dbReference type="PROSITE" id="PS51339">
    <property type="entry name" value="PPASE_MYOTUBULARIN"/>
    <property type="match status" value="1"/>
</dbReference>
<dbReference type="PROSITE" id="PS00383">
    <property type="entry name" value="TYR_PHOSPHATASE_1"/>
    <property type="match status" value="1"/>
</dbReference>
<proteinExistence type="evidence at protein level"/>
<sequence>MTPPRPPSGRVRSLRDYSSESEKMDGTGSWDTLEWTKLDSTSGSGSFSNLSCLLESERVIVEGYGVVLINTDEAGTLLVTNFRILFLSEGTRKVIPLGTIPLATIEKFNKMVLKVQSSPRQSDKIPPRRLLQVTGKDMRIIVYGFRPRTKQRRNVFDALLKCTKPERVWDLYTFACGPSKFGNANPKERLLNEYFRLLGKSSIRASMDMIEDGAFTLSNELWRISDLNSNYNLCQTYPFAFMIPKSISDAELLQACSFRARCRLPVITWCQPGSGAVIARSSQPLVGLMMNMRSNLDEKLVAAFCSQLPGAKGERRKLYIADARPRKNALANGAMGGGSESSSNYFQSEIVFFGIDNIHAMRESFSRVRDYLDMHGTTSSDGRSSFLRHGGWTWGGGNLSSMSASVSLLGDSGWLIHIQSVLAGAAWIAARVAMESASVLVHCSDGWDRTTQLVSLACLLLDPYYRTFAGFQALVEKDWLAFGHPFSDRVGMPNISGSGNFDFPRQSSSAGSFPSSPVRQSSGSAASQSSSSSHGHNNYSPIFMQWIDSVSQLMRMYPCAFEFSPTFLVDFMDCLLSCRFGNFLCNSEKEREQCGIADACGCLWAYLTDLRSFSATSHVHCNPFYDPLKYDGPLLPPAASLAPTLWPQFHLRWACPEEAKAADIGVQCRAMTVKYSEMQKEKEAAERRVDEISFAMESLSAELLRERHLSWVARESANRATKEYAALTRAVQSLGCKINFTTSDVEDDPRSSLENNPRRRNRHGNNSDVSVSISLMPEENTSGNPKGRVCEALCPLRTREGVCRWPEVGCAHVGSQFVGLKANFDAFDRLAIYDSYFQPK</sequence>
<protein>
    <recommendedName>
        <fullName>Phosphatidylinositol-3-phosphatase myotubularin-1</fullName>
        <shortName>AtMTM1</shortName>
    </recommendedName>
    <alternativeName>
        <fullName>Phosphatidylinositol-3,5-bisphosphate 3-phosphatase</fullName>
        <ecNumber evidence="6 8 11">3.1.3.95</ecNumber>
    </alternativeName>
    <alternativeName>
        <fullName>Phosphatidylinositol-3-phosphate phosphatase</fullName>
        <ecNumber evidence="6 8">3.1.3.64</ecNumber>
    </alternativeName>
</protein>
<feature type="chain" id="PRO_0000425083" description="Phosphatidylinositol-3-phosphatase myotubularin-1">
    <location>
        <begin position="1"/>
        <end position="840"/>
    </location>
</feature>
<feature type="domain" description="GRAM">
    <location>
        <begin position="45"/>
        <end position="112"/>
    </location>
</feature>
<feature type="domain" description="Myotubularin phosphatase" evidence="3">
    <location>
        <begin position="199"/>
        <end position="650"/>
    </location>
</feature>
<feature type="region of interest" description="Disordered" evidence="5">
    <location>
        <begin position="1"/>
        <end position="28"/>
    </location>
</feature>
<feature type="region of interest" description="Disordered" evidence="5">
    <location>
        <begin position="506"/>
        <end position="535"/>
    </location>
</feature>
<feature type="region of interest" description="Disordered" evidence="5">
    <location>
        <begin position="745"/>
        <end position="771"/>
    </location>
</feature>
<feature type="coiled-coil region" evidence="2">
    <location>
        <begin position="666"/>
        <end position="734"/>
    </location>
</feature>
<feature type="compositionally biased region" description="Basic and acidic residues" evidence="5">
    <location>
        <begin position="13"/>
        <end position="25"/>
    </location>
</feature>
<feature type="compositionally biased region" description="Low complexity" evidence="5">
    <location>
        <begin position="507"/>
        <end position="535"/>
    </location>
</feature>
<feature type="active site" description="Phosphocysteine intermediate" evidence="4">
    <location>
        <position position="443"/>
    </location>
</feature>
<feature type="binding site" evidence="1">
    <location>
        <begin position="332"/>
        <end position="335"/>
    </location>
    <ligand>
        <name>substrate</name>
    </ligand>
</feature>
<feature type="binding site" evidence="1">
    <location>
        <begin position="357"/>
        <end position="358"/>
    </location>
    <ligand>
        <name>substrate</name>
    </ligand>
</feature>
<feature type="binding site" evidence="1">
    <location>
        <begin position="443"/>
        <end position="449"/>
    </location>
    <ligand>
        <name>substrate</name>
    </ligand>
</feature>
<feature type="binding site" evidence="1">
    <location>
        <position position="489"/>
    </location>
    <ligand>
        <name>substrate</name>
    </ligand>
</feature>
<feature type="splice variant" id="VSP_053569" description="In isoform 2." evidence="9">
    <original>LVEKDWLAFGHPFSDRVGMPNISGSGNFDF</original>
    <variation>VFVCWKFPFISCASVFRISSLTIFKLFPWA</variation>
    <location>
        <begin position="474"/>
        <end position="503"/>
    </location>
</feature>
<feature type="splice variant" id="VSP_053570" description="In isoform 2." evidence="9">
    <location>
        <begin position="504"/>
        <end position="840"/>
    </location>
</feature>
<feature type="sequence conflict" description="In Ref. 3; AAO42157." evidence="10" ref="3">
    <original>D</original>
    <variation>G</variation>
    <location>
        <position position="356"/>
    </location>
</feature>
<gene>
    <name type="primary">MTM1</name>
    <name type="ordered locus">At3g10550</name>
    <name type="ORF">F13M14.17</name>
    <name type="ORF">F18K10.13</name>
</gene>
<comment type="function">
    <text evidence="6 7 8">Phosphatase with phosphoinositide 3'-phosphatase activity that can use phosphatidylinositol-3-phosphate (PtdIns3P) and phosphatidylinositol-3,5-diphosphate (PtdIns3,5P(2)) as substrates and produces phosphatidylinositol-5-phosphate (PtdIns5P); participates in pathway(s) that transfer gene regulatory signals to the nucleus. Required for recovery after water deprivation, via the accumulation of PtdIns5P upon dehydration; high PtdIns5P levels mediate ATX1 cytoplasmic localization, thus down-regulating the expression of ATX1-dependent genes. Confers sensitivity to soil-water-deficit stress.</text>
</comment>
<comment type="catalytic activity">
    <reaction evidence="6 7 8">
        <text>a 1,2-diacyl-sn-glycero-3-phospho-(1D-myo-inositol-3-phosphate) + H2O = a 1,2-diacyl-sn-glycero-3-phospho-(1D-myo-inositol) + phosphate</text>
        <dbReference type="Rhea" id="RHEA:12316"/>
        <dbReference type="ChEBI" id="CHEBI:15377"/>
        <dbReference type="ChEBI" id="CHEBI:43474"/>
        <dbReference type="ChEBI" id="CHEBI:57880"/>
        <dbReference type="ChEBI" id="CHEBI:58088"/>
        <dbReference type="EC" id="3.1.3.64"/>
    </reaction>
</comment>
<comment type="catalytic activity">
    <reaction evidence="6 8 11">
        <text>a 1,2-diacyl-sn-glycero-3-phospho-(1D-myo-inositol-3,5-bisphosphate) + H2O = a 1,2-diacyl-sn-glycero-3-phospho-(1D-myo-inositol-5-phosphate) + phosphate</text>
        <dbReference type="Rhea" id="RHEA:39019"/>
        <dbReference type="ChEBI" id="CHEBI:15377"/>
        <dbReference type="ChEBI" id="CHEBI:43474"/>
        <dbReference type="ChEBI" id="CHEBI:57795"/>
        <dbReference type="ChEBI" id="CHEBI:57923"/>
        <dbReference type="EC" id="3.1.3.95"/>
    </reaction>
</comment>
<comment type="biophysicochemical properties">
    <kinetics>
        <KM evidence="6 8">201.7 uM for PtdIns3P</KM>
        <KM evidence="6 8">146 uM for PtdIns3,5P(2)</KM>
        <Vmax evidence="6 8">94.3 pmol/min/mg enzyme with PtdIns3P as substrate</Vmax>
        <Vmax evidence="6 8">142.6 pmol/min/mg enzyme with PtdIns3,5P(2) as substrate</Vmax>
    </kinetics>
</comment>
<comment type="subcellular location">
    <subcellularLocation>
        <location evidence="8">Cytoplasm</location>
    </subcellularLocation>
    <subcellularLocation>
        <location evidence="8">Endosome membrane</location>
        <topology evidence="8">Peripheral membrane protein</topology>
    </subcellularLocation>
    <text>Present in granular particles of varying abundance and size at the cell periphery and throughout the cytoplasm.</text>
</comment>
<comment type="alternative products">
    <event type="alternative splicing"/>
    <isoform>
        <id>F4J3T8-1</id>
        <name>1</name>
        <sequence type="displayed"/>
    </isoform>
    <isoform>
        <id>F4J3T8-2</id>
        <name>2</name>
        <sequence type="described" ref="VSP_053569 VSP_053570"/>
    </isoform>
</comment>
<comment type="tissue specificity">
    <text evidence="8">Mostly expressed in siliques and leaves (including hydathodes), and, to a lower extent, in flowers and roots.</text>
</comment>
<comment type="developmental stage">
    <text evidence="8">Expressed in young seedlings, especially at the tip of the growing shoot meristems. Later observed in roots and in aerial parts. Weakly expressed in leaves with local higher levels in the trichomes, hydathodes and in cotyledon veins. Present at low levels in flowers with higher accumulation in cells at organ-stem junctions, as well as in the septum and the funiculi of the developing siliques. Also observed in a diffuse pattern, appearing as patches along the stem but also concentrated at the peduncle.</text>
</comment>
<comment type="induction">
    <text evidence="6">Accumulates upon dehydration.</text>
</comment>
<comment type="disruption phenotype">
    <text evidence="7 8">No visible phenotype in normal conditions. Impaired accumulation of PtdIns5P in response to stress such as dehydration, leading to an increased resistance.</text>
</comment>
<comment type="similarity">
    <text evidence="10">Belongs to the protein-tyrosine phosphatase family. Non-receptor class myotubularin subfamily.</text>
</comment>
<comment type="sequence caution" evidence="10">
    <conflict type="erroneous gene model prediction">
        <sequence resource="EMBL-CDS" id="AAF76357"/>
    </conflict>
</comment>
<comment type="sequence caution" evidence="10">
    <conflict type="erroneous gene model prediction">
        <sequence resource="EMBL-CDS" id="AAG51396"/>
    </conflict>
</comment>
<organism>
    <name type="scientific">Arabidopsis thaliana</name>
    <name type="common">Mouse-ear cress</name>
    <dbReference type="NCBI Taxonomy" id="3702"/>
    <lineage>
        <taxon>Eukaryota</taxon>
        <taxon>Viridiplantae</taxon>
        <taxon>Streptophyta</taxon>
        <taxon>Embryophyta</taxon>
        <taxon>Tracheophyta</taxon>
        <taxon>Spermatophyta</taxon>
        <taxon>Magnoliopsida</taxon>
        <taxon>eudicotyledons</taxon>
        <taxon>Gunneridae</taxon>
        <taxon>Pentapetalae</taxon>
        <taxon>rosids</taxon>
        <taxon>malvids</taxon>
        <taxon>Brassicales</taxon>
        <taxon>Brassicaceae</taxon>
        <taxon>Camelineae</taxon>
        <taxon>Arabidopsis</taxon>
    </lineage>
</organism>
<name>MYTM1_ARATH</name>